<sequence length="1295" mass="140043">MNKIYSLKYSAATGGLIAVSELAKRVSGKTNRKLVATMLSLAVAGTVNAANIDISNVWARDYLDLAQNKGIFQPGATDVTITLKNGDKFSFHNLSIPDFSGAAASGAATAIGGSYSVTVAHNKKNPQAAETQVYAQSSYRVVDRRNSNDFEIQRLNKFVVETVGATPAETNPTTYSDALERYGIVTSDGSKKIIGFRAGSGGTSFINGESKISTNSAYSHDLLSASLFEVTQWDSYGMMIYKNDKTFRNLEIFGDSGSGAYLYDNKLEKWVLVGTTHGIASVNGDQLTWITKYNDKLVSELKDTYSHKINLNGNNVTIKNTDITLHQNNADTTGTQEKITKDKDIVFTNGGDVLFKDNLDFGSGGIIFDEGHEYNINGQGFTFKGAGIDIGKESIVNWNALYSSDDVLHKIGPGTLNVQKKQGANIKIGEGNVILNEEGTFNNIYLASGNGKVILNKDNSLGNDQYAGIFFTKRGGTLDLNGHNQTFTRIAATDDGTTITNSDTTKEAVLAINNEDSYIYHGNINGNIKLTHNINSQDKKTNAKLILDGSVNTKNDVEVSNASLTMQGHATEHAIFRSSANHCSLVFLCGTDWVTVLKETESSYNKKFNSDYKSNNQQTSFDQPDWKTGVFKFDTLHLNNADFSISRNANVEGNISANKSAITIGDKNVYIDNLAGKNITNNGFDFKQTISTNLSIGETKFTGGITAHNSQIAIGDQAVVTLNGATFLDNTPISIDKGAKVIAQNSMFTTKGIDISGELTMMGIPEQNSKTVTPGLHYAADGFRLSGGNANFIARNMASVTGNIYADDAATITLGQPETETPTISSAYQAWAETLLYGFDTAYRGAITAPKATVSMNNAIWHLNSQSSINRLETKDSMVRFTGDNGKFTTLTVNNLTIDDSAFVLRANLAQADQLVVNKSLSGKNNLLLVDFIEKNGNSNGLNIDLVSAPKGTAVDVFKATTRSIGFSDVTPVIEQKNDTDKATWTLIGYKSVANADAAKKATLLMSGGYKAFLAEVNNLNKRMGDLRDINGESGAWARIISGTGSAGGGFSDNYTHVQVGADNKHELDGLDLFTGVTMTYTDSHAGSDAFSGETKSVGAGLYASAMFESGAYIDLIGKYVHHDNEYTATFAGLGTRDYSSHSWYAGAEVGYRYHVTDSAWIEPQAELVYGAVSGKQFSWKDQGMNLTMKDKDFNPLIGRTGVDVGKSFSGKDWKVTARAGLGYQFDLFANGETVLRDASGEKRIKGEKDGRMLMNVGLNAEIRDNLRFGLEFEKSAFGKYNVDNAINANFRYSF</sequence>
<keyword id="KW-0998">Cell outer membrane</keyword>
<keyword id="KW-0903">Direct protein sequencing</keyword>
<keyword id="KW-0378">Hydrolase</keyword>
<keyword id="KW-0472">Membrane</keyword>
<keyword id="KW-0574">Periplasm</keyword>
<keyword id="KW-0645">Protease</keyword>
<keyword id="KW-1185">Reference proteome</keyword>
<keyword id="KW-0964">Secreted</keyword>
<keyword id="KW-0720">Serine protease</keyword>
<keyword id="KW-0732">Signal</keyword>
<keyword id="KW-0812">Transmembrane</keyword>
<keyword id="KW-1134">Transmembrane beta strand</keyword>
<keyword id="KW-0843">Virulence</keyword>
<keyword id="KW-0865">Zymogen</keyword>
<proteinExistence type="evidence at protein level"/>
<name>SAT_ECOL6</name>
<dbReference type="EC" id="3.4.21.-"/>
<dbReference type="EMBL" id="AF289092">
    <property type="protein sequence ID" value="AAG30168.1"/>
    <property type="molecule type" value="Genomic_DNA"/>
</dbReference>
<dbReference type="EMBL" id="AJ586888">
    <property type="protein sequence ID" value="CAE55775.1"/>
    <property type="molecule type" value="Genomic_DNA"/>
</dbReference>
<dbReference type="EMBL" id="AE014075">
    <property type="protein sequence ID" value="AAN82067.1"/>
    <property type="status" value="ALT_INIT"/>
    <property type="molecule type" value="Genomic_DNA"/>
</dbReference>
<dbReference type="SMR" id="Q8FDW4"/>
<dbReference type="STRING" id="199310.c3619"/>
<dbReference type="MEROPS" id="N04.002"/>
<dbReference type="TCDB" id="1.B.12.4.6">
    <property type="family name" value="the autotransporter-1 (at-1) family"/>
</dbReference>
<dbReference type="KEGG" id="ecc:c3619"/>
<dbReference type="eggNOG" id="COG3468">
    <property type="taxonomic scope" value="Bacteria"/>
</dbReference>
<dbReference type="HOGENOM" id="CLU_000723_0_0_6"/>
<dbReference type="PHI-base" id="PHI:10444"/>
<dbReference type="PHI-base" id="PHI:5262"/>
<dbReference type="Proteomes" id="UP000001410">
    <property type="component" value="Chromosome"/>
</dbReference>
<dbReference type="GO" id="GO:0009279">
    <property type="term" value="C:cell outer membrane"/>
    <property type="evidence" value="ECO:0007669"/>
    <property type="project" value="UniProtKB-SubCell"/>
</dbReference>
<dbReference type="GO" id="GO:0009986">
    <property type="term" value="C:cell surface"/>
    <property type="evidence" value="ECO:0007669"/>
    <property type="project" value="UniProtKB-SubCell"/>
</dbReference>
<dbReference type="GO" id="GO:0005576">
    <property type="term" value="C:extracellular region"/>
    <property type="evidence" value="ECO:0007669"/>
    <property type="project" value="UniProtKB-SubCell"/>
</dbReference>
<dbReference type="GO" id="GO:0042597">
    <property type="term" value="C:periplasmic space"/>
    <property type="evidence" value="ECO:0007669"/>
    <property type="project" value="UniProtKB-SubCell"/>
</dbReference>
<dbReference type="GO" id="GO:0004175">
    <property type="term" value="F:endopeptidase activity"/>
    <property type="evidence" value="ECO:0007669"/>
    <property type="project" value="InterPro"/>
</dbReference>
<dbReference type="GO" id="GO:0008236">
    <property type="term" value="F:serine-type peptidase activity"/>
    <property type="evidence" value="ECO:0007669"/>
    <property type="project" value="UniProtKB-KW"/>
</dbReference>
<dbReference type="GO" id="GO:0006508">
    <property type="term" value="P:proteolysis"/>
    <property type="evidence" value="ECO:0007669"/>
    <property type="project" value="UniProtKB-KW"/>
</dbReference>
<dbReference type="CDD" id="cd01343">
    <property type="entry name" value="PL1_Passenger_AT"/>
    <property type="match status" value="1"/>
</dbReference>
<dbReference type="Gene3D" id="2.160.20.20">
    <property type="match status" value="1"/>
</dbReference>
<dbReference type="Gene3D" id="2.40.10.120">
    <property type="match status" value="1"/>
</dbReference>
<dbReference type="Gene3D" id="2.40.128.130">
    <property type="entry name" value="Autotransporter beta-domain"/>
    <property type="match status" value="1"/>
</dbReference>
<dbReference type="InterPro" id="IPR005546">
    <property type="entry name" value="Autotransporte_beta"/>
</dbReference>
<dbReference type="InterPro" id="IPR036709">
    <property type="entry name" value="Autotransporte_beta_dom_sf"/>
</dbReference>
<dbReference type="InterPro" id="IPR012332">
    <property type="entry name" value="Autotransporter_pectin_lyase_C"/>
</dbReference>
<dbReference type="InterPro" id="IPR024973">
    <property type="entry name" value="ESPR"/>
</dbReference>
<dbReference type="InterPro" id="IPR006315">
    <property type="entry name" value="OM_autotransptr_brl_dom"/>
</dbReference>
<dbReference type="InterPro" id="IPR011050">
    <property type="entry name" value="Pectin_lyase_fold/virulence"/>
</dbReference>
<dbReference type="InterPro" id="IPR030396">
    <property type="entry name" value="Peptidase_S6_dom"/>
</dbReference>
<dbReference type="NCBIfam" id="TIGR01414">
    <property type="entry name" value="autotrans_barl"/>
    <property type="match status" value="1"/>
</dbReference>
<dbReference type="Pfam" id="PF03797">
    <property type="entry name" value="Autotransporter"/>
    <property type="match status" value="1"/>
</dbReference>
<dbReference type="Pfam" id="PF13018">
    <property type="entry name" value="ESPR"/>
    <property type="match status" value="1"/>
</dbReference>
<dbReference type="Pfam" id="PF02395">
    <property type="entry name" value="Peptidase_S6"/>
    <property type="match status" value="1"/>
</dbReference>
<dbReference type="SMART" id="SM00869">
    <property type="entry name" value="Autotransporter"/>
    <property type="match status" value="1"/>
</dbReference>
<dbReference type="SUPFAM" id="SSF103515">
    <property type="entry name" value="Autotransporter"/>
    <property type="match status" value="1"/>
</dbReference>
<dbReference type="SUPFAM" id="SSF51126">
    <property type="entry name" value="Pectin lyase-like"/>
    <property type="match status" value="1"/>
</dbReference>
<dbReference type="PROSITE" id="PS51208">
    <property type="entry name" value="AUTOTRANSPORTER"/>
    <property type="match status" value="1"/>
</dbReference>
<dbReference type="PROSITE" id="PS51691">
    <property type="entry name" value="PEPTIDASE_S6"/>
    <property type="match status" value="1"/>
</dbReference>
<feature type="signal peptide" evidence="5">
    <location>
        <begin position="1"/>
        <end position="49"/>
    </location>
</feature>
<feature type="chain" id="PRO_0000387608" description="Serine protease sat autotransporter">
    <location>
        <begin position="50"/>
        <end position="1295"/>
    </location>
</feature>
<feature type="chain" id="PRO_0000026978" description="Serine protease sat">
    <location>
        <begin position="50"/>
        <end position="1018"/>
    </location>
</feature>
<feature type="chain" id="PRO_0000026979" description="Serine protease sat translocator" evidence="2">
    <location>
        <begin position="1019"/>
        <end position="1295"/>
    </location>
</feature>
<feature type="domain" description="Peptidase S6" evidence="4">
    <location>
        <begin position="51"/>
        <end position="300"/>
    </location>
</feature>
<feature type="domain" description="Autotransporter" evidence="3">
    <location>
        <begin position="1029"/>
        <end position="1295"/>
    </location>
</feature>
<feature type="active site" description="Charge relay system" evidence="4">
    <location>
        <position position="121"/>
    </location>
</feature>
<feature type="active site" description="Charge relay system" evidence="4">
    <location>
        <position position="149"/>
    </location>
</feature>
<feature type="active site" description="Charge relay system" evidence="4">
    <location>
        <position position="256"/>
    </location>
</feature>
<feature type="site" description="Cleavage" evidence="2">
    <location>
        <begin position="1018"/>
        <end position="1019"/>
    </location>
</feature>
<feature type="sequence variant" description="In strain: Nissle 1917.">
    <original>R</original>
    <variation>K</variation>
    <location>
        <position position="140"/>
    </location>
</feature>
<feature type="sequence variant" description="In strain: Nissle 1917.">
    <original>D</original>
    <variation>N</variation>
    <location>
        <position position="352"/>
    </location>
</feature>
<feature type="sequence variant" description="In strain: Nissle 1917.">
    <original>S</original>
    <variation>T</variation>
    <location>
        <position position="579"/>
    </location>
</feature>
<feature type="sequence variant" description="In strain: Nissle 1917.">
    <original>Y</original>
    <variation>H</variation>
    <location>
        <position position="612"/>
    </location>
</feature>
<feature type="sequence variant" description="In strain: Nissle 1917.">
    <original>V</original>
    <variation>A</variation>
    <location>
        <position position="669"/>
    </location>
</feature>
<feature type="sequence variant" description="In strain: Nissle 1917.">
    <original>D</original>
    <variation>N</variation>
    <location>
        <position position="729"/>
    </location>
</feature>
<feature type="sequence variant" description="In strain: Nissle 1917.">
    <original>N</original>
    <variation>D</variation>
    <location>
        <position position="894"/>
    </location>
</feature>
<feature type="sequence variant" description="In strain: Nissle 1917.">
    <original>I</original>
    <variation>M</variation>
    <location>
        <position position="1041"/>
    </location>
</feature>
<feature type="sequence conflict" description="In Ref. 1; AA sequence." evidence="7" ref="1">
    <original>W</original>
    <variation>Y</variation>
    <location>
        <position position="58"/>
    </location>
</feature>
<feature type="sequence conflict" description="In Ref. 1; AA sequence." evidence="7" ref="1">
    <original>R</original>
    <variation>S</variation>
    <location>
        <position position="60"/>
    </location>
</feature>
<accession>Q8FDW4</accession>
<accession>Q6KD43</accession>
<accession>Q9F6T1</accession>
<comment type="function">
    <text evidence="5 6">Shows serine protease activity and displays cytophatic activity, including elongation, rounding, and detachment of a proportion of the cells from monolayer in culture. Triggers vacuolation within the cytoplasm of the human bladder and kidney cells.</text>
</comment>
<comment type="activity regulation">
    <text evidence="5">Inhibited by phenylmethylsulfonyl fluoride and Pefabloc.</text>
</comment>
<comment type="subcellular location">
    <molecule>Serine protease sat autotransporter</molecule>
    <subcellularLocation>
        <location evidence="1">Periplasm</location>
    </subcellularLocation>
</comment>
<comment type="subcellular location">
    <molecule>Serine protease sat</molecule>
    <subcellularLocation>
        <location>Secreted</location>
    </subcellularLocation>
    <subcellularLocation>
        <location>Cell surface</location>
    </subcellularLocation>
</comment>
<comment type="subcellular location">
    <molecule>Serine protease sat translocator</molecule>
    <subcellularLocation>
        <location evidence="1">Cell outer membrane</location>
        <topology evidence="1">Multi-pass membrane protein</topology>
    </subcellularLocation>
    <text evidence="1">The cleaved C-terminal fragment (autotransporter domain) is localized in the outer membrane.</text>
</comment>
<comment type="domain">
    <text evidence="1">The signal peptide, cleaved at the inner membrane, guides the autotransporter protein to the periplasmic space. Then, insertion of the C-terminal translocator domain in the outer membrane forms a hydrophilic pore for the translocation of the passenger domain to the bacterial cell surface, with subsequent cleavage (By similarity).</text>
</comment>
<comment type="PTM">
    <text evidence="7">Cleaved to release the mature protein from the outer membrane.</text>
</comment>
<comment type="sequence caution" evidence="7">
    <conflict type="erroneous initiation">
        <sequence resource="EMBL-CDS" id="AAN82067"/>
    </conflict>
</comment>
<protein>
    <recommendedName>
        <fullName>Serine protease sat autotransporter</fullName>
        <ecNumber>3.4.21.-</ecNumber>
    </recommendedName>
    <component>
        <recommendedName>
            <fullName>Serine protease sat</fullName>
        </recommendedName>
        <alternativeName>
            <fullName>Secreted autotransporter toxin sat</fullName>
        </alternativeName>
    </component>
    <component>
        <recommendedName>
            <fullName>Serine protease sat translocator</fullName>
        </recommendedName>
    </component>
</protein>
<organism>
    <name type="scientific">Escherichia coli O6:H1 (strain CFT073 / ATCC 700928 / UPEC)</name>
    <dbReference type="NCBI Taxonomy" id="199310"/>
    <lineage>
        <taxon>Bacteria</taxon>
        <taxon>Pseudomonadati</taxon>
        <taxon>Pseudomonadota</taxon>
        <taxon>Gammaproteobacteria</taxon>
        <taxon>Enterobacterales</taxon>
        <taxon>Enterobacteriaceae</taxon>
        <taxon>Escherichia</taxon>
    </lineage>
</organism>
<reference key="1">
    <citation type="journal article" date="2000" name="Mol. Microbiol.">
        <title>Identification of sat, an autotransporter toxin produced by uropathogenic Escherichia coli.</title>
        <authorList>
            <person name="Guyer D.M."/>
            <person name="Henderson I.R."/>
            <person name="Nataro J.P."/>
            <person name="Mobley H.L.T."/>
        </authorList>
    </citation>
    <scope>NUCLEOTIDE SEQUENCE [GENOMIC DNA]</scope>
    <scope>ACTIVITY REGULATION</scope>
    <scope>PROTEIN SEQUENCE OF 50-68</scope>
    <scope>FUNCTION</scope>
    <source>
        <strain>CFT073 / ATCC 700928 / UPEC</strain>
    </source>
</reference>
<reference key="2">
    <citation type="journal article" date="2004" name="J. Bacteriol.">
        <title>Analysis of the genome structure of the nonpathogenic probiotic Escherichia coli strain Nissle 1917.</title>
        <authorList>
            <person name="Grozdanov L."/>
            <person name="Raasch C."/>
            <person name="Schulze J."/>
            <person name="Sonnenborn U."/>
            <person name="Gottschalk G."/>
            <person name="Hacker J."/>
            <person name="Dobrindt U."/>
        </authorList>
    </citation>
    <scope>NUCLEOTIDE SEQUENCE [GENOMIC DNA]</scope>
    <source>
        <strain>O6:K5:H1 / Nissle 1917</strain>
    </source>
</reference>
<reference key="3">
    <citation type="journal article" date="2002" name="Proc. Natl. Acad. Sci. U.S.A.">
        <title>Extensive mosaic structure revealed by the complete genome sequence of uropathogenic Escherichia coli.</title>
        <authorList>
            <person name="Welch R.A."/>
            <person name="Burland V."/>
            <person name="Plunkett G. III"/>
            <person name="Redford P."/>
            <person name="Roesch P."/>
            <person name="Rasko D."/>
            <person name="Buckles E.L."/>
            <person name="Liou S.-R."/>
            <person name="Boutin A."/>
            <person name="Hackett J."/>
            <person name="Stroud D."/>
            <person name="Mayhew G.F."/>
            <person name="Rose D.J."/>
            <person name="Zhou S."/>
            <person name="Schwartz D.C."/>
            <person name="Perna N.T."/>
            <person name="Mobley H.L.T."/>
            <person name="Donnenberg M.S."/>
            <person name="Blattner F.R."/>
        </authorList>
    </citation>
    <scope>NUCLEOTIDE SEQUENCE [LARGE SCALE GENOMIC DNA]</scope>
    <source>
        <strain>CFT073 / ATCC 700928 / UPEC</strain>
    </source>
</reference>
<reference key="4">
    <citation type="journal article" date="2002" name="Infect. Immun.">
        <title>Sat, the secreted autotransporter toxin of uropathogenic Escherichia coli, is a vacuolating cytotoxin for bladder and kidney epithelial cells.</title>
        <authorList>
            <person name="Guyer D.M."/>
            <person name="Radulovic S."/>
            <person name="Jones F.-E."/>
            <person name="Mobley H.L.T."/>
        </authorList>
    </citation>
    <scope>FUNCTION</scope>
    <source>
        <strain>CFT073 / ATCC 700928 / UPEC</strain>
    </source>
</reference>
<evidence type="ECO:0000250" key="1"/>
<evidence type="ECO:0000255" key="2"/>
<evidence type="ECO:0000255" key="3">
    <source>
        <dbReference type="PROSITE-ProRule" id="PRU00556"/>
    </source>
</evidence>
<evidence type="ECO:0000255" key="4">
    <source>
        <dbReference type="PROSITE-ProRule" id="PRU01028"/>
    </source>
</evidence>
<evidence type="ECO:0000269" key="5">
    <source>
    </source>
</evidence>
<evidence type="ECO:0000269" key="6">
    <source>
    </source>
</evidence>
<evidence type="ECO:0000305" key="7"/>
<gene>
    <name type="primary">sat</name>
    <name type="ordered locus">c3619</name>
</gene>